<keyword id="KW-1003">Cell membrane</keyword>
<keyword id="KW-0963">Cytoplasm</keyword>
<keyword id="KW-0449">Lipoprotein</keyword>
<keyword id="KW-0472">Membrane</keyword>
<keyword id="KW-0539">Nucleus</keyword>
<keyword id="KW-0564">Palmitate</keyword>
<keyword id="KW-1267">Proteomics identification</keyword>
<keyword id="KW-1185">Reference proteome</keyword>
<keyword id="KW-0734">Signal transduction inhibitor</keyword>
<proteinExistence type="evidence at protein level"/>
<sequence>MSSAPNGRKKRPSRSTRSSIFQISKPPLQSGDWERRGSGSESAHKTQRALDDCKMLVQEFNTQVALYRELVISIGDVSVSCPSLRAEMHKTRTKGCEMARQAHQKLAAISGPEDGEIHPEICRLYIQLQCCLEMYTTEMLKSICLLGSLQFHRKGKEPGGGTKSLDCKIEESAETPALEDSSSSPVDSQQHSWQVSTDIENTERDMREMKNLLSKLRETMPLPLKNQDDSSLLNLTPYPLVRRRKRRFFGLCCLISS</sequence>
<comment type="function">
    <text evidence="2">Regulator of G protein-coupled receptor (GPCR) signaling. Regulatory subunit of the R7-Gbeta5 complexes that acts by controlling the subcellular location of the R7-Gbeta5 complexes. When palmitoylated, it targets the R7-Gbeta5 complexes to the plasma membrane, leading to inhibit G protein alpha subunits. When it is unpalmitoylated, the R7-Gbeta5 complexes undergo a nuclear/cytoplasmic shuttling. May also act by controlling the proteolytic stability of R7 proteins, probably by protecting them from degradation.</text>
</comment>
<comment type="subunit">
    <text evidence="2">Interacts with 'R7' family proteins RGS6, RGS7, RGS9 and RGS11. Component of some R7-Gbeta5 complex composed of some R7 protein (RGS6, RGS7, RGS9 or RGS11), Gbeta5 (GNB5) and RGS7BP.</text>
</comment>
<comment type="subcellular location">
    <subcellularLocation>
        <location evidence="2">Nucleus</location>
    </subcellularLocation>
    <subcellularLocation>
        <location evidence="2">Cytoplasm</location>
    </subcellularLocation>
    <subcellularLocation>
        <location evidence="2">Cell membrane</location>
        <topology evidence="2">Lipid-anchor</topology>
    </subcellularLocation>
    <text evidence="2">Shuttling between the plasma membrane, the cytoplasm and the nucleus is regulated by palmitoylation.</text>
</comment>
<comment type="domain">
    <text evidence="2">The nuclear localization signal is both required for nuclear localization and palmitoylation.</text>
</comment>
<comment type="PTM">
    <text evidence="2">Palmitoylated. Undergoes rapid palmitoylation turnover. De novo and turnover palmitoylation are both mediated by ZDHHC2. Palmitoylation regulates the cell membrane and nuclear shuttling and the regulation of GPCR signaling. Upon depalmitoylation, it is targeted from the plasma membrane into the nucleus. GPCR signaling inhibits depalmitoylation and promotes localization to the plasma membrane.</text>
</comment>
<comment type="similarity">
    <text evidence="7">Belongs to the RGS7BP/RGS9BP family.</text>
</comment>
<organism>
    <name type="scientific">Homo sapiens</name>
    <name type="common">Human</name>
    <dbReference type="NCBI Taxonomy" id="9606"/>
    <lineage>
        <taxon>Eukaryota</taxon>
        <taxon>Metazoa</taxon>
        <taxon>Chordata</taxon>
        <taxon>Craniata</taxon>
        <taxon>Vertebrata</taxon>
        <taxon>Euteleostomi</taxon>
        <taxon>Mammalia</taxon>
        <taxon>Eutheria</taxon>
        <taxon>Euarchontoglires</taxon>
        <taxon>Primates</taxon>
        <taxon>Haplorrhini</taxon>
        <taxon>Catarrhini</taxon>
        <taxon>Hominidae</taxon>
        <taxon>Homo</taxon>
    </lineage>
</organism>
<accession>Q6MZT1</accession>
<accession>B7Z3X1</accession>
<name>R7BP_HUMAN</name>
<evidence type="ECO:0000250" key="1"/>
<evidence type="ECO:0000250" key="2">
    <source>
        <dbReference type="UniProtKB" id="Q8BQP9"/>
    </source>
</evidence>
<evidence type="ECO:0000256" key="3">
    <source>
        <dbReference type="SAM" id="MobiDB-lite"/>
    </source>
</evidence>
<evidence type="ECO:0000269" key="4">
    <source>
    </source>
</evidence>
<evidence type="ECO:0000269" key="5">
    <source>
    </source>
</evidence>
<evidence type="ECO:0000269" key="6">
    <source>
    </source>
</evidence>
<evidence type="ECO:0000305" key="7"/>
<dbReference type="EMBL" id="AK296443">
    <property type="protein sequence ID" value="BAH12357.1"/>
    <property type="molecule type" value="mRNA"/>
</dbReference>
<dbReference type="EMBL" id="AC091862">
    <property type="status" value="NOT_ANNOTATED_CDS"/>
    <property type="molecule type" value="Genomic_DNA"/>
</dbReference>
<dbReference type="EMBL" id="AC035143">
    <property type="status" value="NOT_ANNOTATED_CDS"/>
    <property type="molecule type" value="Genomic_DNA"/>
</dbReference>
<dbReference type="EMBL" id="AC008854">
    <property type="status" value="NOT_ANNOTATED_CDS"/>
    <property type="molecule type" value="Genomic_DNA"/>
</dbReference>
<dbReference type="EMBL" id="CH471137">
    <property type="protein sequence ID" value="EAW51372.1"/>
    <property type="molecule type" value="Genomic_DNA"/>
</dbReference>
<dbReference type="EMBL" id="BC140707">
    <property type="protein sequence ID" value="AAI40708.1"/>
    <property type="molecule type" value="mRNA"/>
</dbReference>
<dbReference type="EMBL" id="BX640900">
    <property type="protein sequence ID" value="CAE45947.1"/>
    <property type="molecule type" value="mRNA"/>
</dbReference>
<dbReference type="CCDS" id="CCDS34170.1"/>
<dbReference type="RefSeq" id="NP_001025046.1">
    <property type="nucleotide sequence ID" value="NM_001029875.3"/>
</dbReference>
<dbReference type="RefSeq" id="NP_001258819.1">
    <property type="nucleotide sequence ID" value="NM_001271890.1"/>
</dbReference>
<dbReference type="RefSeq" id="NP_001258820.1">
    <property type="nucleotide sequence ID" value="NM_001271891.1"/>
</dbReference>
<dbReference type="SMR" id="Q6MZT1"/>
<dbReference type="BioGRID" id="134967">
    <property type="interactions" value="3"/>
</dbReference>
<dbReference type="CORUM" id="Q6MZT1"/>
<dbReference type="FunCoup" id="Q6MZT1">
    <property type="interactions" value="84"/>
</dbReference>
<dbReference type="IntAct" id="Q6MZT1">
    <property type="interactions" value="1"/>
</dbReference>
<dbReference type="STRING" id="9606.ENSP00000334851"/>
<dbReference type="GlyGen" id="Q6MZT1">
    <property type="glycosylation" value="1 site, 1 O-linked glycan (1 site)"/>
</dbReference>
<dbReference type="PhosphoSitePlus" id="Q6MZT1"/>
<dbReference type="SwissPalm" id="Q6MZT1"/>
<dbReference type="BioMuta" id="RGS7BP"/>
<dbReference type="DMDM" id="296452985"/>
<dbReference type="jPOST" id="Q6MZT1"/>
<dbReference type="MassIVE" id="Q6MZT1"/>
<dbReference type="PaxDb" id="9606-ENSP00000334851"/>
<dbReference type="PeptideAtlas" id="Q6MZT1"/>
<dbReference type="ProteomicsDB" id="66586"/>
<dbReference type="TopDownProteomics" id="Q6MZT1"/>
<dbReference type="Antibodypedia" id="63779">
    <property type="antibodies" value="10 antibodies from 7 providers"/>
</dbReference>
<dbReference type="DNASU" id="401190"/>
<dbReference type="Ensembl" id="ENST00000334025.3">
    <property type="protein sequence ID" value="ENSP00000334851.2"/>
    <property type="gene ID" value="ENSG00000186479.5"/>
</dbReference>
<dbReference type="GeneID" id="401190"/>
<dbReference type="KEGG" id="hsa:401190"/>
<dbReference type="MANE-Select" id="ENST00000334025.3">
    <property type="protein sequence ID" value="ENSP00000334851.2"/>
    <property type="RefSeq nucleotide sequence ID" value="NM_001029875.3"/>
    <property type="RefSeq protein sequence ID" value="NP_001025046.1"/>
</dbReference>
<dbReference type="UCSC" id="uc003jtj.5">
    <property type="organism name" value="human"/>
</dbReference>
<dbReference type="AGR" id="HGNC:23271"/>
<dbReference type="CTD" id="401190"/>
<dbReference type="DisGeNET" id="401190"/>
<dbReference type="GeneCards" id="RGS7BP"/>
<dbReference type="HGNC" id="HGNC:23271">
    <property type="gene designation" value="RGS7BP"/>
</dbReference>
<dbReference type="HPA" id="ENSG00000186479">
    <property type="expression patterns" value="Tissue enhanced (brain)"/>
</dbReference>
<dbReference type="MIM" id="610890">
    <property type="type" value="gene"/>
</dbReference>
<dbReference type="neXtProt" id="NX_Q6MZT1"/>
<dbReference type="OpenTargets" id="ENSG00000186479"/>
<dbReference type="PharmGKB" id="PA162401279"/>
<dbReference type="VEuPathDB" id="HostDB:ENSG00000186479"/>
<dbReference type="eggNOG" id="ENOG502QPUF">
    <property type="taxonomic scope" value="Eukaryota"/>
</dbReference>
<dbReference type="GeneTree" id="ENSGT00940000153725"/>
<dbReference type="HOGENOM" id="CLU_112711_0_0_1"/>
<dbReference type="InParanoid" id="Q6MZT1"/>
<dbReference type="OMA" id="KDMRDMK"/>
<dbReference type="OrthoDB" id="9876293at2759"/>
<dbReference type="PAN-GO" id="Q6MZT1">
    <property type="GO annotations" value="4 GO annotations based on evolutionary models"/>
</dbReference>
<dbReference type="PhylomeDB" id="Q6MZT1"/>
<dbReference type="TreeFam" id="TF330985"/>
<dbReference type="PathwayCommons" id="Q6MZT1"/>
<dbReference type="SignaLink" id="Q6MZT1"/>
<dbReference type="BioGRID-ORCS" id="401190">
    <property type="hits" value="13 hits in 1145 CRISPR screens"/>
</dbReference>
<dbReference type="ChiTaRS" id="RGS7BP">
    <property type="organism name" value="human"/>
</dbReference>
<dbReference type="GenomeRNAi" id="401190"/>
<dbReference type="Pharos" id="Q6MZT1">
    <property type="development level" value="Tbio"/>
</dbReference>
<dbReference type="PRO" id="PR:Q6MZT1"/>
<dbReference type="Proteomes" id="UP000005640">
    <property type="component" value="Chromosome 5"/>
</dbReference>
<dbReference type="RNAct" id="Q6MZT1">
    <property type="molecule type" value="protein"/>
</dbReference>
<dbReference type="Bgee" id="ENSG00000186479">
    <property type="expression patterns" value="Expressed in lateral nuclear group of thalamus and 124 other cell types or tissues"/>
</dbReference>
<dbReference type="GO" id="GO:0030424">
    <property type="term" value="C:axon"/>
    <property type="evidence" value="ECO:0007669"/>
    <property type="project" value="Ensembl"/>
</dbReference>
<dbReference type="GO" id="GO:0005737">
    <property type="term" value="C:cytoplasm"/>
    <property type="evidence" value="ECO:0007669"/>
    <property type="project" value="UniProtKB-SubCell"/>
</dbReference>
<dbReference type="GO" id="GO:0043198">
    <property type="term" value="C:dendritic shaft"/>
    <property type="evidence" value="ECO:0007669"/>
    <property type="project" value="Ensembl"/>
</dbReference>
<dbReference type="GO" id="GO:0044327">
    <property type="term" value="C:dendritic spine head"/>
    <property type="evidence" value="ECO:0007669"/>
    <property type="project" value="Ensembl"/>
</dbReference>
<dbReference type="GO" id="GO:0098978">
    <property type="term" value="C:glutamatergic synapse"/>
    <property type="evidence" value="ECO:0007669"/>
    <property type="project" value="Ensembl"/>
</dbReference>
<dbReference type="GO" id="GO:0043005">
    <property type="term" value="C:neuron projection"/>
    <property type="evidence" value="ECO:0000318"/>
    <property type="project" value="GO_Central"/>
</dbReference>
<dbReference type="GO" id="GO:0005634">
    <property type="term" value="C:nucleus"/>
    <property type="evidence" value="ECO:0000318"/>
    <property type="project" value="GO_Central"/>
</dbReference>
<dbReference type="GO" id="GO:0043204">
    <property type="term" value="C:perikaryon"/>
    <property type="evidence" value="ECO:0007669"/>
    <property type="project" value="Ensembl"/>
</dbReference>
<dbReference type="GO" id="GO:0098794">
    <property type="term" value="C:postsynapse"/>
    <property type="evidence" value="ECO:0000318"/>
    <property type="project" value="GO_Central"/>
</dbReference>
<dbReference type="GO" id="GO:0098839">
    <property type="term" value="C:postsynaptic density membrane"/>
    <property type="evidence" value="ECO:0007669"/>
    <property type="project" value="Ensembl"/>
</dbReference>
<dbReference type="GO" id="GO:0042734">
    <property type="term" value="C:presynaptic membrane"/>
    <property type="evidence" value="ECO:0007669"/>
    <property type="project" value="Ensembl"/>
</dbReference>
<dbReference type="GO" id="GO:0007186">
    <property type="term" value="P:G protein-coupled receptor signaling pathway"/>
    <property type="evidence" value="ECO:0000318"/>
    <property type="project" value="GO_Central"/>
</dbReference>
<dbReference type="GO" id="GO:0009968">
    <property type="term" value="P:negative regulation of signal transduction"/>
    <property type="evidence" value="ECO:0007669"/>
    <property type="project" value="UniProtKB-KW"/>
</dbReference>
<dbReference type="GO" id="GO:0060078">
    <property type="term" value="P:regulation of postsynaptic membrane potential"/>
    <property type="evidence" value="ECO:0007669"/>
    <property type="project" value="Ensembl"/>
</dbReference>
<dbReference type="InterPro" id="IPR026512">
    <property type="entry name" value="RGS7BP/RGS9BP"/>
</dbReference>
<dbReference type="PANTHER" id="PTHR21029">
    <property type="entry name" value="R-SEVEN BINDING PROTEIN (R7BP) HOMOLOG"/>
    <property type="match status" value="1"/>
</dbReference>
<gene>
    <name type="primary">RGS7BP</name>
    <name type="synonym">R7BP</name>
</gene>
<reference key="1">
    <citation type="journal article" date="2004" name="Nat. Genet.">
        <title>Complete sequencing and characterization of 21,243 full-length human cDNAs.</title>
        <authorList>
            <person name="Ota T."/>
            <person name="Suzuki Y."/>
            <person name="Nishikawa T."/>
            <person name="Otsuki T."/>
            <person name="Sugiyama T."/>
            <person name="Irie R."/>
            <person name="Wakamatsu A."/>
            <person name="Hayashi K."/>
            <person name="Sato H."/>
            <person name="Nagai K."/>
            <person name="Kimura K."/>
            <person name="Makita H."/>
            <person name="Sekine M."/>
            <person name="Obayashi M."/>
            <person name="Nishi T."/>
            <person name="Shibahara T."/>
            <person name="Tanaka T."/>
            <person name="Ishii S."/>
            <person name="Yamamoto J."/>
            <person name="Saito K."/>
            <person name="Kawai Y."/>
            <person name="Isono Y."/>
            <person name="Nakamura Y."/>
            <person name="Nagahari K."/>
            <person name="Murakami K."/>
            <person name="Yasuda T."/>
            <person name="Iwayanagi T."/>
            <person name="Wagatsuma M."/>
            <person name="Shiratori A."/>
            <person name="Sudo H."/>
            <person name="Hosoiri T."/>
            <person name="Kaku Y."/>
            <person name="Kodaira H."/>
            <person name="Kondo H."/>
            <person name="Sugawara M."/>
            <person name="Takahashi M."/>
            <person name="Kanda K."/>
            <person name="Yokoi T."/>
            <person name="Furuya T."/>
            <person name="Kikkawa E."/>
            <person name="Omura Y."/>
            <person name="Abe K."/>
            <person name="Kamihara K."/>
            <person name="Katsuta N."/>
            <person name="Sato K."/>
            <person name="Tanikawa M."/>
            <person name="Yamazaki M."/>
            <person name="Ninomiya K."/>
            <person name="Ishibashi T."/>
            <person name="Yamashita H."/>
            <person name="Murakawa K."/>
            <person name="Fujimori K."/>
            <person name="Tanai H."/>
            <person name="Kimata M."/>
            <person name="Watanabe M."/>
            <person name="Hiraoka S."/>
            <person name="Chiba Y."/>
            <person name="Ishida S."/>
            <person name="Ono Y."/>
            <person name="Takiguchi S."/>
            <person name="Watanabe S."/>
            <person name="Yosida M."/>
            <person name="Hotuta T."/>
            <person name="Kusano J."/>
            <person name="Kanehori K."/>
            <person name="Takahashi-Fujii A."/>
            <person name="Hara H."/>
            <person name="Tanase T.-O."/>
            <person name="Nomura Y."/>
            <person name="Togiya S."/>
            <person name="Komai F."/>
            <person name="Hara R."/>
            <person name="Takeuchi K."/>
            <person name="Arita M."/>
            <person name="Imose N."/>
            <person name="Musashino K."/>
            <person name="Yuuki H."/>
            <person name="Oshima A."/>
            <person name="Sasaki N."/>
            <person name="Aotsuka S."/>
            <person name="Yoshikawa Y."/>
            <person name="Matsunawa H."/>
            <person name="Ichihara T."/>
            <person name="Shiohata N."/>
            <person name="Sano S."/>
            <person name="Moriya S."/>
            <person name="Momiyama H."/>
            <person name="Satoh N."/>
            <person name="Takami S."/>
            <person name="Terashima Y."/>
            <person name="Suzuki O."/>
            <person name="Nakagawa S."/>
            <person name="Senoh A."/>
            <person name="Mizoguchi H."/>
            <person name="Goto Y."/>
            <person name="Shimizu F."/>
            <person name="Wakebe H."/>
            <person name="Hishigaki H."/>
            <person name="Watanabe T."/>
            <person name="Sugiyama A."/>
            <person name="Takemoto M."/>
            <person name="Kawakami B."/>
            <person name="Yamazaki M."/>
            <person name="Watanabe K."/>
            <person name="Kumagai A."/>
            <person name="Itakura S."/>
            <person name="Fukuzumi Y."/>
            <person name="Fujimori Y."/>
            <person name="Komiyama M."/>
            <person name="Tashiro H."/>
            <person name="Tanigami A."/>
            <person name="Fujiwara T."/>
            <person name="Ono T."/>
            <person name="Yamada K."/>
            <person name="Fujii Y."/>
            <person name="Ozaki K."/>
            <person name="Hirao M."/>
            <person name="Ohmori Y."/>
            <person name="Kawabata A."/>
            <person name="Hikiji T."/>
            <person name="Kobatake N."/>
            <person name="Inagaki H."/>
            <person name="Ikema Y."/>
            <person name="Okamoto S."/>
            <person name="Okitani R."/>
            <person name="Kawakami T."/>
            <person name="Noguchi S."/>
            <person name="Itoh T."/>
            <person name="Shigeta K."/>
            <person name="Senba T."/>
            <person name="Matsumura K."/>
            <person name="Nakajima Y."/>
            <person name="Mizuno T."/>
            <person name="Morinaga M."/>
            <person name="Sasaki M."/>
            <person name="Togashi T."/>
            <person name="Oyama M."/>
            <person name="Hata H."/>
            <person name="Watanabe M."/>
            <person name="Komatsu T."/>
            <person name="Mizushima-Sugano J."/>
            <person name="Satoh T."/>
            <person name="Shirai Y."/>
            <person name="Takahashi Y."/>
            <person name="Nakagawa K."/>
            <person name="Okumura K."/>
            <person name="Nagase T."/>
            <person name="Nomura N."/>
            <person name="Kikuchi H."/>
            <person name="Masuho Y."/>
            <person name="Yamashita R."/>
            <person name="Nakai K."/>
            <person name="Yada T."/>
            <person name="Nakamura Y."/>
            <person name="Ohara O."/>
            <person name="Isogai T."/>
            <person name="Sugano S."/>
        </authorList>
    </citation>
    <scope>NUCLEOTIDE SEQUENCE [LARGE SCALE MRNA]</scope>
    <scope>VARIANT VAL-255</scope>
    <source>
        <tissue>Thalamus</tissue>
    </source>
</reference>
<reference key="2">
    <citation type="journal article" date="2004" name="Nature">
        <title>The DNA sequence and comparative analysis of human chromosome 5.</title>
        <authorList>
            <person name="Schmutz J."/>
            <person name="Martin J."/>
            <person name="Terry A."/>
            <person name="Couronne O."/>
            <person name="Grimwood J."/>
            <person name="Lowry S."/>
            <person name="Gordon L.A."/>
            <person name="Scott D."/>
            <person name="Xie G."/>
            <person name="Huang W."/>
            <person name="Hellsten U."/>
            <person name="Tran-Gyamfi M."/>
            <person name="She X."/>
            <person name="Prabhakar S."/>
            <person name="Aerts A."/>
            <person name="Altherr M."/>
            <person name="Bajorek E."/>
            <person name="Black S."/>
            <person name="Branscomb E."/>
            <person name="Caoile C."/>
            <person name="Challacombe J.F."/>
            <person name="Chan Y.M."/>
            <person name="Denys M."/>
            <person name="Detter J.C."/>
            <person name="Escobar J."/>
            <person name="Flowers D."/>
            <person name="Fotopulos D."/>
            <person name="Glavina T."/>
            <person name="Gomez M."/>
            <person name="Gonzales E."/>
            <person name="Goodstein D."/>
            <person name="Grigoriev I."/>
            <person name="Groza M."/>
            <person name="Hammon N."/>
            <person name="Hawkins T."/>
            <person name="Haydu L."/>
            <person name="Israni S."/>
            <person name="Jett J."/>
            <person name="Kadner K."/>
            <person name="Kimball H."/>
            <person name="Kobayashi A."/>
            <person name="Lopez F."/>
            <person name="Lou Y."/>
            <person name="Martinez D."/>
            <person name="Medina C."/>
            <person name="Morgan J."/>
            <person name="Nandkeshwar R."/>
            <person name="Noonan J.P."/>
            <person name="Pitluck S."/>
            <person name="Pollard M."/>
            <person name="Predki P."/>
            <person name="Priest J."/>
            <person name="Ramirez L."/>
            <person name="Retterer J."/>
            <person name="Rodriguez A."/>
            <person name="Rogers S."/>
            <person name="Salamov A."/>
            <person name="Salazar A."/>
            <person name="Thayer N."/>
            <person name="Tice H."/>
            <person name="Tsai M."/>
            <person name="Ustaszewska A."/>
            <person name="Vo N."/>
            <person name="Wheeler J."/>
            <person name="Wu K."/>
            <person name="Yang J."/>
            <person name="Dickson M."/>
            <person name="Cheng J.-F."/>
            <person name="Eichler E.E."/>
            <person name="Olsen A."/>
            <person name="Pennacchio L.A."/>
            <person name="Rokhsar D.S."/>
            <person name="Richardson P."/>
            <person name="Lucas S.M."/>
            <person name="Myers R.M."/>
            <person name="Rubin E.M."/>
        </authorList>
    </citation>
    <scope>NUCLEOTIDE SEQUENCE [LARGE SCALE GENOMIC DNA]</scope>
</reference>
<reference key="3">
    <citation type="submission" date="2005-09" db="EMBL/GenBank/DDBJ databases">
        <authorList>
            <person name="Mural R.J."/>
            <person name="Istrail S."/>
            <person name="Sutton G."/>
            <person name="Florea L."/>
            <person name="Halpern A.L."/>
            <person name="Mobarry C.M."/>
            <person name="Lippert R."/>
            <person name="Walenz B."/>
            <person name="Shatkay H."/>
            <person name="Dew I."/>
            <person name="Miller J.R."/>
            <person name="Flanigan M.J."/>
            <person name="Edwards N.J."/>
            <person name="Bolanos R."/>
            <person name="Fasulo D."/>
            <person name="Halldorsson B.V."/>
            <person name="Hannenhalli S."/>
            <person name="Turner R."/>
            <person name="Yooseph S."/>
            <person name="Lu F."/>
            <person name="Nusskern D.R."/>
            <person name="Shue B.C."/>
            <person name="Zheng X.H."/>
            <person name="Zhong F."/>
            <person name="Delcher A.L."/>
            <person name="Huson D.H."/>
            <person name="Kravitz S.A."/>
            <person name="Mouchard L."/>
            <person name="Reinert K."/>
            <person name="Remington K.A."/>
            <person name="Clark A.G."/>
            <person name="Waterman M.S."/>
            <person name="Eichler E.E."/>
            <person name="Adams M.D."/>
            <person name="Hunkapiller M.W."/>
            <person name="Myers E.W."/>
            <person name="Venter J.C."/>
        </authorList>
    </citation>
    <scope>NUCLEOTIDE SEQUENCE [LARGE SCALE GENOMIC DNA]</scope>
</reference>
<reference key="4">
    <citation type="journal article" date="2004" name="Genome Res.">
        <title>The status, quality, and expansion of the NIH full-length cDNA project: the Mammalian Gene Collection (MGC).</title>
        <authorList>
            <consortium name="The MGC Project Team"/>
        </authorList>
    </citation>
    <scope>NUCLEOTIDE SEQUENCE [LARGE SCALE MRNA]</scope>
    <scope>VARIANT VAL-255</scope>
    <source>
        <tissue>Brain</tissue>
    </source>
</reference>
<reference key="5">
    <citation type="journal article" date="2007" name="BMC Genomics">
        <title>The full-ORF clone resource of the German cDNA consortium.</title>
        <authorList>
            <person name="Bechtel S."/>
            <person name="Rosenfelder H."/>
            <person name="Duda A."/>
            <person name="Schmidt C.P."/>
            <person name="Ernst U."/>
            <person name="Wellenreuther R."/>
            <person name="Mehrle A."/>
            <person name="Schuster C."/>
            <person name="Bahr A."/>
            <person name="Bloecker H."/>
            <person name="Heubner D."/>
            <person name="Hoerlein A."/>
            <person name="Michel G."/>
            <person name="Wedler H."/>
            <person name="Koehrer K."/>
            <person name="Ottenwaelder B."/>
            <person name="Poustka A."/>
            <person name="Wiemann S."/>
            <person name="Schupp I."/>
        </authorList>
    </citation>
    <scope>NUCLEOTIDE SEQUENCE [LARGE SCALE MRNA] OF 29-257</scope>
    <scope>VARIANT VAL-255</scope>
    <source>
        <tissue>Endometrium</tissue>
    </source>
</reference>
<feature type="chain" id="PRO_0000287595" description="Regulator of G-protein signaling 7-binding protein">
    <location>
        <begin position="1"/>
        <end position="257"/>
    </location>
</feature>
<feature type="region of interest" description="Disordered" evidence="3">
    <location>
        <begin position="1"/>
        <end position="45"/>
    </location>
</feature>
<feature type="region of interest" description="Disordered" evidence="3">
    <location>
        <begin position="174"/>
        <end position="196"/>
    </location>
</feature>
<feature type="short sequence motif" description="Nuclear localization signal" evidence="1">
    <location>
        <begin position="242"/>
        <end position="247"/>
    </location>
</feature>
<feature type="compositionally biased region" description="Basic and acidic residues" evidence="3">
    <location>
        <begin position="32"/>
        <end position="45"/>
    </location>
</feature>
<feature type="compositionally biased region" description="Low complexity" evidence="3">
    <location>
        <begin position="180"/>
        <end position="192"/>
    </location>
</feature>
<feature type="lipid moiety-binding region" description="S-palmitoyl cysteine" evidence="1">
    <location>
        <position position="252"/>
    </location>
</feature>
<feature type="lipid moiety-binding region" description="S-palmitoyl cysteine" evidence="1">
    <location>
        <position position="253"/>
    </location>
</feature>
<feature type="sequence variant" id="VAR_032334" description="In dbSNP:rs889248." evidence="4 5 6">
    <original>I</original>
    <variation>V</variation>
    <location>
        <position position="255"/>
    </location>
</feature>
<protein>
    <recommendedName>
        <fullName>Regulator of G-protein signaling 7-binding protein</fullName>
    </recommendedName>
    <alternativeName>
        <fullName>R7 family-binding protein</fullName>
    </alternativeName>
</protein>